<evidence type="ECO:0000255" key="1">
    <source>
        <dbReference type="HAMAP-Rule" id="MF_00141"/>
    </source>
</evidence>
<evidence type="ECO:0000305" key="2"/>
<keyword id="KW-0963">Cytoplasm</keyword>
<keyword id="KW-0251">Elongation factor</keyword>
<keyword id="KW-0648">Protein biosynthesis</keyword>
<keyword id="KW-1185">Reference proteome</keyword>
<reference key="1">
    <citation type="journal article" date="2002" name="DNA Res.">
        <title>Complete genomic sequence of nitrogen-fixing symbiotic bacterium Bradyrhizobium japonicum USDA110.</title>
        <authorList>
            <person name="Kaneko T."/>
            <person name="Nakamura Y."/>
            <person name="Sato S."/>
            <person name="Minamisawa K."/>
            <person name="Uchiumi T."/>
            <person name="Sasamoto S."/>
            <person name="Watanabe A."/>
            <person name="Idesawa K."/>
            <person name="Iriguchi M."/>
            <person name="Kawashima K."/>
            <person name="Kohara M."/>
            <person name="Matsumoto M."/>
            <person name="Shimpo S."/>
            <person name="Tsuruoka H."/>
            <person name="Wada T."/>
            <person name="Yamada M."/>
            <person name="Tabata S."/>
        </authorList>
    </citation>
    <scope>NUCLEOTIDE SEQUENCE [LARGE SCALE GENOMIC DNA]</scope>
    <source>
        <strain>JCM 10833 / BCRC 13528 / IAM 13628 / NBRC 14792 / USDA 110</strain>
    </source>
</reference>
<dbReference type="EMBL" id="BA000040">
    <property type="protein sequence ID" value="BAC49651.1"/>
    <property type="status" value="ALT_INIT"/>
    <property type="molecule type" value="Genomic_DNA"/>
</dbReference>
<dbReference type="RefSeq" id="NP_771026.2">
    <property type="nucleotide sequence ID" value="NC_004463.1"/>
</dbReference>
<dbReference type="RefSeq" id="WP_011087158.1">
    <property type="nucleotide sequence ID" value="NC_004463.1"/>
</dbReference>
<dbReference type="SMR" id="Q89M07"/>
<dbReference type="FunCoup" id="Q89M07">
    <property type="interactions" value="672"/>
</dbReference>
<dbReference type="STRING" id="224911.AAV28_19020"/>
<dbReference type="EnsemblBacteria" id="BAC49651">
    <property type="protein sequence ID" value="BAC49651"/>
    <property type="gene ID" value="BAC49651"/>
</dbReference>
<dbReference type="GeneID" id="46491386"/>
<dbReference type="KEGG" id="bja:bll4386"/>
<dbReference type="PATRIC" id="fig|224911.44.peg.4135"/>
<dbReference type="eggNOG" id="COG0231">
    <property type="taxonomic scope" value="Bacteria"/>
</dbReference>
<dbReference type="HOGENOM" id="CLU_074944_1_1_5"/>
<dbReference type="InParanoid" id="Q89M07"/>
<dbReference type="OrthoDB" id="9801844at2"/>
<dbReference type="PhylomeDB" id="Q89M07"/>
<dbReference type="UniPathway" id="UPA00345"/>
<dbReference type="Proteomes" id="UP000002526">
    <property type="component" value="Chromosome"/>
</dbReference>
<dbReference type="GO" id="GO:0005737">
    <property type="term" value="C:cytoplasm"/>
    <property type="evidence" value="ECO:0000318"/>
    <property type="project" value="GO_Central"/>
</dbReference>
<dbReference type="GO" id="GO:0003746">
    <property type="term" value="F:translation elongation factor activity"/>
    <property type="evidence" value="ECO:0000318"/>
    <property type="project" value="GO_Central"/>
</dbReference>
<dbReference type="GO" id="GO:0043043">
    <property type="term" value="P:peptide biosynthetic process"/>
    <property type="evidence" value="ECO:0007669"/>
    <property type="project" value="InterPro"/>
</dbReference>
<dbReference type="CDD" id="cd04470">
    <property type="entry name" value="S1_EF-P_repeat_1"/>
    <property type="match status" value="1"/>
</dbReference>
<dbReference type="CDD" id="cd05794">
    <property type="entry name" value="S1_EF-P_repeat_2"/>
    <property type="match status" value="1"/>
</dbReference>
<dbReference type="FunFam" id="2.40.50.140:FF:000004">
    <property type="entry name" value="Elongation factor P"/>
    <property type="match status" value="1"/>
</dbReference>
<dbReference type="FunFam" id="2.40.50.140:FF:000009">
    <property type="entry name" value="Elongation factor P"/>
    <property type="match status" value="1"/>
</dbReference>
<dbReference type="Gene3D" id="2.30.30.30">
    <property type="match status" value="1"/>
</dbReference>
<dbReference type="Gene3D" id="2.40.50.140">
    <property type="entry name" value="Nucleic acid-binding proteins"/>
    <property type="match status" value="2"/>
</dbReference>
<dbReference type="HAMAP" id="MF_00141">
    <property type="entry name" value="EF_P"/>
    <property type="match status" value="1"/>
</dbReference>
<dbReference type="InterPro" id="IPR015365">
    <property type="entry name" value="Elong-fact-P_C"/>
</dbReference>
<dbReference type="InterPro" id="IPR012340">
    <property type="entry name" value="NA-bd_OB-fold"/>
</dbReference>
<dbReference type="InterPro" id="IPR014722">
    <property type="entry name" value="Rib_uL2_dom2"/>
</dbReference>
<dbReference type="InterPro" id="IPR020599">
    <property type="entry name" value="Transl_elong_fac_P/YeiP"/>
</dbReference>
<dbReference type="InterPro" id="IPR013185">
    <property type="entry name" value="Transl_elong_KOW-like"/>
</dbReference>
<dbReference type="InterPro" id="IPR001059">
    <property type="entry name" value="Transl_elong_P/YeiP_cen"/>
</dbReference>
<dbReference type="InterPro" id="IPR013852">
    <property type="entry name" value="Transl_elong_P/YeiP_CS"/>
</dbReference>
<dbReference type="InterPro" id="IPR011768">
    <property type="entry name" value="Transl_elongation_fac_P"/>
</dbReference>
<dbReference type="InterPro" id="IPR008991">
    <property type="entry name" value="Translation_prot_SH3-like_sf"/>
</dbReference>
<dbReference type="NCBIfam" id="TIGR00038">
    <property type="entry name" value="efp"/>
    <property type="match status" value="1"/>
</dbReference>
<dbReference type="NCBIfam" id="NF001810">
    <property type="entry name" value="PRK00529.1"/>
    <property type="match status" value="1"/>
</dbReference>
<dbReference type="PANTHER" id="PTHR30053">
    <property type="entry name" value="ELONGATION FACTOR P"/>
    <property type="match status" value="1"/>
</dbReference>
<dbReference type="PANTHER" id="PTHR30053:SF14">
    <property type="entry name" value="TRANSLATION ELONGATION FACTOR KOW-LIKE DOMAIN-CONTAINING PROTEIN"/>
    <property type="match status" value="1"/>
</dbReference>
<dbReference type="Pfam" id="PF01132">
    <property type="entry name" value="EFP"/>
    <property type="match status" value="1"/>
</dbReference>
<dbReference type="Pfam" id="PF08207">
    <property type="entry name" value="EFP_N"/>
    <property type="match status" value="1"/>
</dbReference>
<dbReference type="Pfam" id="PF09285">
    <property type="entry name" value="Elong-fact-P_C"/>
    <property type="match status" value="1"/>
</dbReference>
<dbReference type="PIRSF" id="PIRSF005901">
    <property type="entry name" value="EF-P"/>
    <property type="match status" value="1"/>
</dbReference>
<dbReference type="SMART" id="SM01185">
    <property type="entry name" value="EFP"/>
    <property type="match status" value="1"/>
</dbReference>
<dbReference type="SMART" id="SM00841">
    <property type="entry name" value="Elong-fact-P_C"/>
    <property type="match status" value="1"/>
</dbReference>
<dbReference type="SUPFAM" id="SSF50249">
    <property type="entry name" value="Nucleic acid-binding proteins"/>
    <property type="match status" value="2"/>
</dbReference>
<dbReference type="SUPFAM" id="SSF50104">
    <property type="entry name" value="Translation proteins SH3-like domain"/>
    <property type="match status" value="1"/>
</dbReference>
<dbReference type="PROSITE" id="PS01275">
    <property type="entry name" value="EFP"/>
    <property type="match status" value="1"/>
</dbReference>
<feature type="chain" id="PRO_0000094210" description="Elongation factor P">
    <location>
        <begin position="1"/>
        <end position="188"/>
    </location>
</feature>
<accession>Q89M07</accession>
<name>EFP_BRADU</name>
<comment type="function">
    <text evidence="1">Involved in peptide bond synthesis. Stimulates efficient translation and peptide-bond synthesis on native or reconstituted 70S ribosomes in vitro. Probably functions indirectly by altering the affinity of the ribosome for aminoacyl-tRNA, thus increasing their reactivity as acceptors for peptidyl transferase.</text>
</comment>
<comment type="pathway">
    <text evidence="1">Protein biosynthesis; polypeptide chain elongation.</text>
</comment>
<comment type="subcellular location">
    <subcellularLocation>
        <location evidence="1">Cytoplasm</location>
    </subcellularLocation>
</comment>
<comment type="similarity">
    <text evidence="1">Belongs to the elongation factor P family.</text>
</comment>
<comment type="sequence caution" evidence="2">
    <conflict type="erroneous initiation">
        <sequence resource="EMBL-CDS" id="BAC49651"/>
    </conflict>
</comment>
<proteinExistence type="inferred from homology"/>
<protein>
    <recommendedName>
        <fullName evidence="1">Elongation factor P</fullName>
        <shortName evidence="1">EF-P</shortName>
    </recommendedName>
</protein>
<sequence>MRVIASSIRKGNVIEQDGKLYVVVSAENIHPGKGTPVSQIEMRRISDGVKISERYKTTDQVEKATIEERNFTFLYEDGDGYHFMNPETYDQVQVSKDVVGDAAAYLQPDMTVKLSTHDVNVVSLALPQRVTLEVVETEPVTKGQTASSSYKPAVLSNGIRTTVPPHIAVGTRIVVMTEDGSYSERAKD</sequence>
<gene>
    <name evidence="1" type="primary">efp</name>
    <name type="ordered locus">bll4386</name>
</gene>
<organism>
    <name type="scientific">Bradyrhizobium diazoefficiens (strain JCM 10833 / BCRC 13528 / IAM 13628 / NBRC 14792 / USDA 110)</name>
    <dbReference type="NCBI Taxonomy" id="224911"/>
    <lineage>
        <taxon>Bacteria</taxon>
        <taxon>Pseudomonadati</taxon>
        <taxon>Pseudomonadota</taxon>
        <taxon>Alphaproteobacteria</taxon>
        <taxon>Hyphomicrobiales</taxon>
        <taxon>Nitrobacteraceae</taxon>
        <taxon>Bradyrhizobium</taxon>
    </lineage>
</organism>